<keyword id="KW-0963">Cytoplasm</keyword>
<keyword id="KW-0671">Queuosine biosynthesis</keyword>
<keyword id="KW-0949">S-adenosyl-L-methionine</keyword>
<keyword id="KW-0808">Transferase</keyword>
<feature type="chain" id="PRO_0000231330" description="S-adenosylmethionine:tRNA ribosyltransferase-isomerase">
    <location>
        <begin position="1"/>
        <end position="352"/>
    </location>
</feature>
<accession>Q47AX4</accession>
<organism>
    <name type="scientific">Dechloromonas aromatica (strain RCB)</name>
    <dbReference type="NCBI Taxonomy" id="159087"/>
    <lineage>
        <taxon>Bacteria</taxon>
        <taxon>Pseudomonadati</taxon>
        <taxon>Pseudomonadota</taxon>
        <taxon>Betaproteobacteria</taxon>
        <taxon>Rhodocyclales</taxon>
        <taxon>Azonexaceae</taxon>
        <taxon>Dechloromonas</taxon>
    </lineage>
</organism>
<evidence type="ECO:0000255" key="1">
    <source>
        <dbReference type="HAMAP-Rule" id="MF_00113"/>
    </source>
</evidence>
<sequence length="352" mass="38470">MSLTVDDFDFPLPPELIAQHPAAERRGSRLLHVCGEQLVDRRFADLPTLLKAGDLLVFNDTRVIKARFFGQKDTGGQVEIMLERIVDATHAICQVRASKAPKAGSTMRLADAFTVKMTGRAGADGDFFALELAEPGDFWELSERYGKLPLPPYIEHPAEGTDETRYQTVYAREPGAVAAPTAGLHFDEDMLATLQAQGINTAFLTLHVGAGTYRPMRVEKIADHRMHSERFEIPPATADAITTTRAAGGQVIAVGTTSLRALESAGNEDGTVQVGGAETSIFITPGYRFQVVDRLITNFHLPKSTLLMLVSAFAGYDHIRAAYAHAVAERYRFFSYGDAMLLERTGQPSDAI</sequence>
<reference key="1">
    <citation type="journal article" date="2009" name="BMC Genomics">
        <title>Metabolic analysis of the soil microbe Dechloromonas aromatica str. RCB: indications of a surprisingly complex life-style and cryptic anaerobic pathways for aromatic degradation.</title>
        <authorList>
            <person name="Salinero K.K."/>
            <person name="Keller K."/>
            <person name="Feil W.S."/>
            <person name="Feil H."/>
            <person name="Trong S."/>
            <person name="Di Bartolo G."/>
            <person name="Lapidus A."/>
        </authorList>
    </citation>
    <scope>NUCLEOTIDE SEQUENCE [LARGE SCALE GENOMIC DNA]</scope>
    <source>
        <strain>RCB</strain>
    </source>
</reference>
<dbReference type="EC" id="2.4.99.17" evidence="1"/>
<dbReference type="EMBL" id="CP000089">
    <property type="protein sequence ID" value="AAZ48007.1"/>
    <property type="molecule type" value="Genomic_DNA"/>
</dbReference>
<dbReference type="SMR" id="Q47AX4"/>
<dbReference type="STRING" id="159087.Daro_3277"/>
<dbReference type="KEGG" id="dar:Daro_3277"/>
<dbReference type="eggNOG" id="COG0809">
    <property type="taxonomic scope" value="Bacteria"/>
</dbReference>
<dbReference type="HOGENOM" id="CLU_039110_1_0_4"/>
<dbReference type="OrthoDB" id="9805933at2"/>
<dbReference type="UniPathway" id="UPA00392"/>
<dbReference type="GO" id="GO:0005737">
    <property type="term" value="C:cytoplasm"/>
    <property type="evidence" value="ECO:0007669"/>
    <property type="project" value="UniProtKB-SubCell"/>
</dbReference>
<dbReference type="GO" id="GO:0051075">
    <property type="term" value="F:S-adenosylmethionine:tRNA ribosyltransferase-isomerase activity"/>
    <property type="evidence" value="ECO:0007669"/>
    <property type="project" value="UniProtKB-EC"/>
</dbReference>
<dbReference type="GO" id="GO:0008616">
    <property type="term" value="P:queuosine biosynthetic process"/>
    <property type="evidence" value="ECO:0007669"/>
    <property type="project" value="UniProtKB-UniRule"/>
</dbReference>
<dbReference type="GO" id="GO:0002099">
    <property type="term" value="P:tRNA wobble guanine modification"/>
    <property type="evidence" value="ECO:0007669"/>
    <property type="project" value="TreeGrafter"/>
</dbReference>
<dbReference type="FunFam" id="3.40.1780.10:FF:000001">
    <property type="entry name" value="S-adenosylmethionine:tRNA ribosyltransferase-isomerase"/>
    <property type="match status" value="1"/>
</dbReference>
<dbReference type="Gene3D" id="2.40.10.240">
    <property type="entry name" value="QueA-like"/>
    <property type="match status" value="1"/>
</dbReference>
<dbReference type="Gene3D" id="3.40.1780.10">
    <property type="entry name" value="QueA-like"/>
    <property type="match status" value="1"/>
</dbReference>
<dbReference type="HAMAP" id="MF_00113">
    <property type="entry name" value="QueA"/>
    <property type="match status" value="1"/>
</dbReference>
<dbReference type="InterPro" id="IPR003699">
    <property type="entry name" value="QueA"/>
</dbReference>
<dbReference type="InterPro" id="IPR042118">
    <property type="entry name" value="QueA_dom1"/>
</dbReference>
<dbReference type="InterPro" id="IPR042119">
    <property type="entry name" value="QueA_dom2"/>
</dbReference>
<dbReference type="InterPro" id="IPR036100">
    <property type="entry name" value="QueA_sf"/>
</dbReference>
<dbReference type="NCBIfam" id="NF001140">
    <property type="entry name" value="PRK00147.1"/>
    <property type="match status" value="1"/>
</dbReference>
<dbReference type="NCBIfam" id="TIGR00113">
    <property type="entry name" value="queA"/>
    <property type="match status" value="1"/>
</dbReference>
<dbReference type="PANTHER" id="PTHR30307">
    <property type="entry name" value="S-ADENOSYLMETHIONINE:TRNA RIBOSYLTRANSFERASE-ISOMERASE"/>
    <property type="match status" value="1"/>
</dbReference>
<dbReference type="PANTHER" id="PTHR30307:SF0">
    <property type="entry name" value="S-ADENOSYLMETHIONINE:TRNA RIBOSYLTRANSFERASE-ISOMERASE"/>
    <property type="match status" value="1"/>
</dbReference>
<dbReference type="Pfam" id="PF02547">
    <property type="entry name" value="Queuosine_synth"/>
    <property type="match status" value="1"/>
</dbReference>
<dbReference type="SUPFAM" id="SSF111337">
    <property type="entry name" value="QueA-like"/>
    <property type="match status" value="1"/>
</dbReference>
<protein>
    <recommendedName>
        <fullName evidence="1">S-adenosylmethionine:tRNA ribosyltransferase-isomerase</fullName>
        <ecNumber evidence="1">2.4.99.17</ecNumber>
    </recommendedName>
    <alternativeName>
        <fullName evidence="1">Queuosine biosynthesis protein QueA</fullName>
    </alternativeName>
</protein>
<proteinExistence type="inferred from homology"/>
<gene>
    <name evidence="1" type="primary">queA</name>
    <name type="ordered locus">Daro_3277</name>
</gene>
<comment type="function">
    <text evidence="1">Transfers and isomerizes the ribose moiety from AdoMet to the 7-aminomethyl group of 7-deazaguanine (preQ1-tRNA) to give epoxyqueuosine (oQ-tRNA).</text>
</comment>
<comment type="catalytic activity">
    <reaction evidence="1">
        <text>7-aminomethyl-7-carbaguanosine(34) in tRNA + S-adenosyl-L-methionine = epoxyqueuosine(34) in tRNA + adenine + L-methionine + 2 H(+)</text>
        <dbReference type="Rhea" id="RHEA:32155"/>
        <dbReference type="Rhea" id="RHEA-COMP:10342"/>
        <dbReference type="Rhea" id="RHEA-COMP:18582"/>
        <dbReference type="ChEBI" id="CHEBI:15378"/>
        <dbReference type="ChEBI" id="CHEBI:16708"/>
        <dbReference type="ChEBI" id="CHEBI:57844"/>
        <dbReference type="ChEBI" id="CHEBI:59789"/>
        <dbReference type="ChEBI" id="CHEBI:82833"/>
        <dbReference type="ChEBI" id="CHEBI:194443"/>
        <dbReference type="EC" id="2.4.99.17"/>
    </reaction>
</comment>
<comment type="pathway">
    <text evidence="1">tRNA modification; tRNA-queuosine biosynthesis.</text>
</comment>
<comment type="subunit">
    <text evidence="1">Monomer.</text>
</comment>
<comment type="subcellular location">
    <subcellularLocation>
        <location evidence="1">Cytoplasm</location>
    </subcellularLocation>
</comment>
<comment type="similarity">
    <text evidence="1">Belongs to the QueA family.</text>
</comment>
<name>QUEA_DECAR</name>